<feature type="chain" id="PRO_1000076299" description="Protein NrdI">
    <location>
        <begin position="1"/>
        <end position="148"/>
    </location>
</feature>
<dbReference type="EMBL" id="CP000656">
    <property type="protein sequence ID" value="ABP46775.1"/>
    <property type="molecule type" value="Genomic_DNA"/>
</dbReference>
<dbReference type="SMR" id="A4TDU4"/>
<dbReference type="STRING" id="350054.Mflv_4306"/>
<dbReference type="KEGG" id="mgi:Mflv_4306"/>
<dbReference type="eggNOG" id="COG1780">
    <property type="taxonomic scope" value="Bacteria"/>
</dbReference>
<dbReference type="HOGENOM" id="CLU_114845_0_0_11"/>
<dbReference type="OrthoDB" id="350535at2"/>
<dbReference type="GO" id="GO:0010181">
    <property type="term" value="F:FMN binding"/>
    <property type="evidence" value="ECO:0007669"/>
    <property type="project" value="InterPro"/>
</dbReference>
<dbReference type="GO" id="GO:0036211">
    <property type="term" value="P:protein modification process"/>
    <property type="evidence" value="ECO:0007669"/>
    <property type="project" value="InterPro"/>
</dbReference>
<dbReference type="FunFam" id="3.40.50.360:FF:000005">
    <property type="entry name" value="Protein NrdI"/>
    <property type="match status" value="1"/>
</dbReference>
<dbReference type="Gene3D" id="3.40.50.360">
    <property type="match status" value="1"/>
</dbReference>
<dbReference type="HAMAP" id="MF_00128">
    <property type="entry name" value="NrdI"/>
    <property type="match status" value="1"/>
</dbReference>
<dbReference type="InterPro" id="IPR029039">
    <property type="entry name" value="Flavoprotein-like_sf"/>
</dbReference>
<dbReference type="InterPro" id="IPR020852">
    <property type="entry name" value="RNR_Ib_NrdI_bac"/>
</dbReference>
<dbReference type="InterPro" id="IPR004465">
    <property type="entry name" value="RNR_NrdI"/>
</dbReference>
<dbReference type="NCBIfam" id="TIGR00333">
    <property type="entry name" value="nrdI"/>
    <property type="match status" value="1"/>
</dbReference>
<dbReference type="PANTHER" id="PTHR37297">
    <property type="entry name" value="PROTEIN NRDI"/>
    <property type="match status" value="1"/>
</dbReference>
<dbReference type="PANTHER" id="PTHR37297:SF1">
    <property type="entry name" value="PROTEIN NRDI"/>
    <property type="match status" value="1"/>
</dbReference>
<dbReference type="Pfam" id="PF07972">
    <property type="entry name" value="Flavodoxin_NdrI"/>
    <property type="match status" value="1"/>
</dbReference>
<dbReference type="PIRSF" id="PIRSF005087">
    <property type="entry name" value="NrdI"/>
    <property type="match status" value="1"/>
</dbReference>
<dbReference type="SUPFAM" id="SSF52218">
    <property type="entry name" value="Flavoproteins"/>
    <property type="match status" value="1"/>
</dbReference>
<comment type="function">
    <text evidence="1">Probably involved in ribonucleotide reductase function.</text>
</comment>
<comment type="similarity">
    <text evidence="1">Belongs to the NrdI family.</text>
</comment>
<proteinExistence type="inferred from homology"/>
<organism>
    <name type="scientific">Mycolicibacterium gilvum (strain PYR-GCK)</name>
    <name type="common">Mycobacterium gilvum (strain PYR-GCK)</name>
    <dbReference type="NCBI Taxonomy" id="350054"/>
    <lineage>
        <taxon>Bacteria</taxon>
        <taxon>Bacillati</taxon>
        <taxon>Actinomycetota</taxon>
        <taxon>Actinomycetes</taxon>
        <taxon>Mycobacteriales</taxon>
        <taxon>Mycobacteriaceae</taxon>
        <taxon>Mycolicibacterium</taxon>
    </lineage>
</organism>
<protein>
    <recommendedName>
        <fullName evidence="1">Protein NrdI</fullName>
    </recommendedName>
</protein>
<gene>
    <name evidence="1" type="primary">nrdI</name>
    <name type="ordered locus">Mflv_4306</name>
</gene>
<sequence length="148" mass="16573">MANIVYFSSVSENTHRFVQKLELPAIRIPLKDRIRVEEPYVLILPTYGGGHANGPDPDRGGYVPKQVIAFLNDEHNRSLIRGVIAAGNTNFGAEFGYAGVVVSRKCDVPFLYRFELMGTTDDVFAVRAGLQDFWKDQSCPQPSQLQNR</sequence>
<name>NRDI_MYCGI</name>
<accession>A4TDU4</accession>
<reference key="1">
    <citation type="submission" date="2007-04" db="EMBL/GenBank/DDBJ databases">
        <title>Complete sequence of chromosome of Mycobacterium gilvum PYR-GCK.</title>
        <authorList>
            <consortium name="US DOE Joint Genome Institute"/>
            <person name="Copeland A."/>
            <person name="Lucas S."/>
            <person name="Lapidus A."/>
            <person name="Barry K."/>
            <person name="Detter J.C."/>
            <person name="Glavina del Rio T."/>
            <person name="Hammon N."/>
            <person name="Israni S."/>
            <person name="Dalin E."/>
            <person name="Tice H."/>
            <person name="Pitluck S."/>
            <person name="Chain P."/>
            <person name="Malfatti S."/>
            <person name="Shin M."/>
            <person name="Vergez L."/>
            <person name="Schmutz J."/>
            <person name="Larimer F."/>
            <person name="Land M."/>
            <person name="Hauser L."/>
            <person name="Kyrpides N."/>
            <person name="Mikhailova N."/>
            <person name="Miller C."/>
            <person name="Richardson P."/>
        </authorList>
    </citation>
    <scope>NUCLEOTIDE SEQUENCE [LARGE SCALE GENOMIC DNA]</scope>
    <source>
        <strain>PYR-GCK</strain>
    </source>
</reference>
<evidence type="ECO:0000255" key="1">
    <source>
        <dbReference type="HAMAP-Rule" id="MF_00128"/>
    </source>
</evidence>